<proteinExistence type="inferred from homology"/>
<organism>
    <name type="scientific">Hamiltonella defensa subsp. Acyrthosiphon pisum (strain 5AT)</name>
    <dbReference type="NCBI Taxonomy" id="572265"/>
    <lineage>
        <taxon>Bacteria</taxon>
        <taxon>Pseudomonadati</taxon>
        <taxon>Pseudomonadota</taxon>
        <taxon>Gammaproteobacteria</taxon>
        <taxon>Enterobacterales</taxon>
        <taxon>Enterobacteriaceae</taxon>
        <taxon>aphid secondary symbionts</taxon>
        <taxon>Candidatus Hamiltonella</taxon>
    </lineage>
</organism>
<reference key="1">
    <citation type="journal article" date="2009" name="Proc. Natl. Acad. Sci. U.S.A.">
        <title>Hamiltonella defensa, genome evolution of protective bacterial endosymbiont from pathogenic ancestors.</title>
        <authorList>
            <person name="Degnan P.H."/>
            <person name="Yu Y."/>
            <person name="Sisneros N."/>
            <person name="Wing R.A."/>
            <person name="Moran N.A."/>
        </authorList>
    </citation>
    <scope>NUCLEOTIDE SEQUENCE [LARGE SCALE GENOMIC DNA]</scope>
    <source>
        <strain>5AT</strain>
    </source>
</reference>
<sequence length="319" mass="35594">MSESLKIIFAGTPDFSACHLQHLLSHRQKILGVFTQPDRPAGRGKKLAFSPVKILATQHHIPVYQPHSLGLKEEQQSILDLDADVMVVVAYGLLLPQAVLNMPRLGCINVHPSLLPRWRGAAPIQRAIWAGDQETGVTIMQMDSGLDTGNMLYKTVYPIQPDDTGASLQAKLAALGSQDLLLTLKKMAEGKMHGETQDEQKTTYAHKLTKKEARLDWLLPAAHLERCVRAFNPWPVSYFIINEQIIKVWEAQAMPDSQQVSHLQPGTVLKADKNGIQILTSEGVLNMTKFQLPGKKIISAWDFLNSRNEWFQIGKQLLS</sequence>
<protein>
    <recommendedName>
        <fullName evidence="1">Methionyl-tRNA formyltransferase</fullName>
        <ecNumber evidence="1">2.1.2.9</ecNumber>
    </recommendedName>
</protein>
<gene>
    <name evidence="1" type="primary">fmt</name>
    <name type="ordered locus">HDEF_1721</name>
</gene>
<dbReference type="EC" id="2.1.2.9" evidence="1"/>
<dbReference type="EMBL" id="CP001277">
    <property type="protein sequence ID" value="ACQ68324.1"/>
    <property type="molecule type" value="Genomic_DNA"/>
</dbReference>
<dbReference type="RefSeq" id="WP_015874088.1">
    <property type="nucleotide sequence ID" value="NC_012751.1"/>
</dbReference>
<dbReference type="SMR" id="C4K6Y1"/>
<dbReference type="STRING" id="572265.HDEF_1721"/>
<dbReference type="GeneID" id="66261316"/>
<dbReference type="KEGG" id="hde:HDEF_1721"/>
<dbReference type="eggNOG" id="COG0223">
    <property type="taxonomic scope" value="Bacteria"/>
</dbReference>
<dbReference type="HOGENOM" id="CLU_033347_1_2_6"/>
<dbReference type="Proteomes" id="UP000002334">
    <property type="component" value="Chromosome"/>
</dbReference>
<dbReference type="GO" id="GO:0005829">
    <property type="term" value="C:cytosol"/>
    <property type="evidence" value="ECO:0007669"/>
    <property type="project" value="TreeGrafter"/>
</dbReference>
<dbReference type="GO" id="GO:0004479">
    <property type="term" value="F:methionyl-tRNA formyltransferase activity"/>
    <property type="evidence" value="ECO:0007669"/>
    <property type="project" value="UniProtKB-UniRule"/>
</dbReference>
<dbReference type="CDD" id="cd08646">
    <property type="entry name" value="FMT_core_Met-tRNA-FMT_N"/>
    <property type="match status" value="1"/>
</dbReference>
<dbReference type="CDD" id="cd08704">
    <property type="entry name" value="Met_tRNA_FMT_C"/>
    <property type="match status" value="1"/>
</dbReference>
<dbReference type="FunFam" id="3.40.50.170:FF:000003">
    <property type="entry name" value="Methionyl-tRNA formyltransferase"/>
    <property type="match status" value="1"/>
</dbReference>
<dbReference type="Gene3D" id="3.10.25.10">
    <property type="entry name" value="Formyl transferase, C-terminal domain"/>
    <property type="match status" value="1"/>
</dbReference>
<dbReference type="Gene3D" id="3.40.50.170">
    <property type="entry name" value="Formyl transferase, N-terminal domain"/>
    <property type="match status" value="1"/>
</dbReference>
<dbReference type="HAMAP" id="MF_00182">
    <property type="entry name" value="Formyl_trans"/>
    <property type="match status" value="1"/>
</dbReference>
<dbReference type="InterPro" id="IPR005794">
    <property type="entry name" value="Fmt"/>
</dbReference>
<dbReference type="InterPro" id="IPR005793">
    <property type="entry name" value="Formyl_trans_C"/>
</dbReference>
<dbReference type="InterPro" id="IPR037022">
    <property type="entry name" value="Formyl_trans_C_sf"/>
</dbReference>
<dbReference type="InterPro" id="IPR002376">
    <property type="entry name" value="Formyl_transf_N"/>
</dbReference>
<dbReference type="InterPro" id="IPR036477">
    <property type="entry name" value="Formyl_transf_N_sf"/>
</dbReference>
<dbReference type="InterPro" id="IPR011034">
    <property type="entry name" value="Formyl_transferase-like_C_sf"/>
</dbReference>
<dbReference type="InterPro" id="IPR044135">
    <property type="entry name" value="Met-tRNA-FMT_C"/>
</dbReference>
<dbReference type="InterPro" id="IPR041711">
    <property type="entry name" value="Met-tRNA-FMT_N"/>
</dbReference>
<dbReference type="NCBIfam" id="TIGR00460">
    <property type="entry name" value="fmt"/>
    <property type="match status" value="1"/>
</dbReference>
<dbReference type="PANTHER" id="PTHR11138">
    <property type="entry name" value="METHIONYL-TRNA FORMYLTRANSFERASE"/>
    <property type="match status" value="1"/>
</dbReference>
<dbReference type="PANTHER" id="PTHR11138:SF5">
    <property type="entry name" value="METHIONYL-TRNA FORMYLTRANSFERASE, MITOCHONDRIAL"/>
    <property type="match status" value="1"/>
</dbReference>
<dbReference type="Pfam" id="PF02911">
    <property type="entry name" value="Formyl_trans_C"/>
    <property type="match status" value="1"/>
</dbReference>
<dbReference type="Pfam" id="PF00551">
    <property type="entry name" value="Formyl_trans_N"/>
    <property type="match status" value="1"/>
</dbReference>
<dbReference type="SUPFAM" id="SSF50486">
    <property type="entry name" value="FMT C-terminal domain-like"/>
    <property type="match status" value="1"/>
</dbReference>
<dbReference type="SUPFAM" id="SSF53328">
    <property type="entry name" value="Formyltransferase"/>
    <property type="match status" value="1"/>
</dbReference>
<comment type="function">
    <text evidence="1">Attaches a formyl group to the free amino group of methionyl-tRNA(fMet). The formyl group appears to play a dual role in the initiator identity of N-formylmethionyl-tRNA by promoting its recognition by IF2 and preventing the misappropriation of this tRNA by the elongation apparatus.</text>
</comment>
<comment type="catalytic activity">
    <reaction evidence="1">
        <text>L-methionyl-tRNA(fMet) + (6R)-10-formyltetrahydrofolate = N-formyl-L-methionyl-tRNA(fMet) + (6S)-5,6,7,8-tetrahydrofolate + H(+)</text>
        <dbReference type="Rhea" id="RHEA:24380"/>
        <dbReference type="Rhea" id="RHEA-COMP:9952"/>
        <dbReference type="Rhea" id="RHEA-COMP:9953"/>
        <dbReference type="ChEBI" id="CHEBI:15378"/>
        <dbReference type="ChEBI" id="CHEBI:57453"/>
        <dbReference type="ChEBI" id="CHEBI:78530"/>
        <dbReference type="ChEBI" id="CHEBI:78844"/>
        <dbReference type="ChEBI" id="CHEBI:195366"/>
        <dbReference type="EC" id="2.1.2.9"/>
    </reaction>
</comment>
<comment type="similarity">
    <text evidence="1">Belongs to the Fmt family.</text>
</comment>
<feature type="chain" id="PRO_1000203862" description="Methionyl-tRNA formyltransferase">
    <location>
        <begin position="1"/>
        <end position="319"/>
    </location>
</feature>
<feature type="binding site" evidence="1">
    <location>
        <begin position="113"/>
        <end position="116"/>
    </location>
    <ligand>
        <name>(6S)-5,6,7,8-tetrahydrofolate</name>
        <dbReference type="ChEBI" id="CHEBI:57453"/>
    </ligand>
</feature>
<keyword id="KW-0648">Protein biosynthesis</keyword>
<keyword id="KW-0808">Transferase</keyword>
<accession>C4K6Y1</accession>
<name>FMT_HAMD5</name>
<evidence type="ECO:0000255" key="1">
    <source>
        <dbReference type="HAMAP-Rule" id="MF_00182"/>
    </source>
</evidence>